<feature type="chain" id="PRO_0000286010" description="Aquaporin TIP4-3">
    <location>
        <begin position="1"/>
        <end position="249"/>
    </location>
</feature>
<feature type="transmembrane region" description="Helical; Name=1" evidence="2">
    <location>
        <begin position="20"/>
        <end position="40"/>
    </location>
</feature>
<feature type="transmembrane region" description="Helical; Name=2" evidence="2">
    <location>
        <begin position="56"/>
        <end position="76"/>
    </location>
</feature>
<feature type="transmembrane region" description="Helical; Name=3" evidence="2">
    <location>
        <begin position="100"/>
        <end position="122"/>
    </location>
</feature>
<feature type="transmembrane region" description="Helical; Name=4" evidence="2">
    <location>
        <begin position="141"/>
        <end position="161"/>
    </location>
</feature>
<feature type="transmembrane region" description="Helical; Name=5" evidence="2">
    <location>
        <begin position="169"/>
        <end position="189"/>
    </location>
</feature>
<feature type="transmembrane region" description="Helical; Name=6" evidence="2">
    <location>
        <begin position="214"/>
        <end position="234"/>
    </location>
</feature>
<feature type="short sequence motif" description="NPA 1" evidence="1">
    <location>
        <begin position="82"/>
        <end position="84"/>
    </location>
</feature>
<feature type="short sequence motif" description="NPA 2" evidence="1">
    <location>
        <begin position="195"/>
        <end position="197"/>
    </location>
</feature>
<accession>Q9ATL4</accession>
<protein>
    <recommendedName>
        <fullName>Aquaporin TIP4-3</fullName>
    </recommendedName>
    <alternativeName>
        <fullName>Tonoplast intrinsic protein 4-3</fullName>
    </alternativeName>
    <alternativeName>
        <fullName>ZmTIP4-3</fullName>
    </alternativeName>
    <alternativeName>
        <fullName>ZmTIP4;3</fullName>
    </alternativeName>
</protein>
<proteinExistence type="evidence at transcript level"/>
<dbReference type="EMBL" id="AF326507">
    <property type="protein sequence ID" value="AAK26774.1"/>
    <property type="molecule type" value="mRNA"/>
</dbReference>
<dbReference type="RefSeq" id="NP_001105035.1">
    <property type="nucleotide sequence ID" value="NM_001111565.1"/>
</dbReference>
<dbReference type="SMR" id="Q9ATL4"/>
<dbReference type="FunCoup" id="Q9ATL4">
    <property type="interactions" value="556"/>
</dbReference>
<dbReference type="STRING" id="4577.Q9ATL4"/>
<dbReference type="PaxDb" id="4577-GRMZM2G146627_P01"/>
<dbReference type="eggNOG" id="KOG0223">
    <property type="taxonomic scope" value="Eukaryota"/>
</dbReference>
<dbReference type="InParanoid" id="Q9ATL4"/>
<dbReference type="Proteomes" id="UP000007305">
    <property type="component" value="Unplaced"/>
</dbReference>
<dbReference type="ExpressionAtlas" id="Q9ATL4">
    <property type="expression patterns" value="baseline and differential"/>
</dbReference>
<dbReference type="GO" id="GO:0016020">
    <property type="term" value="C:membrane"/>
    <property type="evidence" value="ECO:0000318"/>
    <property type="project" value="GO_Central"/>
</dbReference>
<dbReference type="GO" id="GO:0005774">
    <property type="term" value="C:vacuolar membrane"/>
    <property type="evidence" value="ECO:0007669"/>
    <property type="project" value="UniProtKB-SubCell"/>
</dbReference>
<dbReference type="GO" id="GO:0015250">
    <property type="term" value="F:water channel activity"/>
    <property type="evidence" value="ECO:0000318"/>
    <property type="project" value="GO_Central"/>
</dbReference>
<dbReference type="GO" id="GO:0006833">
    <property type="term" value="P:water transport"/>
    <property type="evidence" value="ECO:0000318"/>
    <property type="project" value="GO_Central"/>
</dbReference>
<dbReference type="FunFam" id="1.20.1080.10:FF:000002">
    <property type="entry name" value="Probable aquaporin TIP1-1"/>
    <property type="match status" value="1"/>
</dbReference>
<dbReference type="Gene3D" id="1.20.1080.10">
    <property type="entry name" value="Glycerol uptake facilitator protein"/>
    <property type="match status" value="1"/>
</dbReference>
<dbReference type="InterPro" id="IPR023271">
    <property type="entry name" value="Aquaporin-like"/>
</dbReference>
<dbReference type="InterPro" id="IPR034294">
    <property type="entry name" value="Aquaporin_transptr"/>
</dbReference>
<dbReference type="InterPro" id="IPR000425">
    <property type="entry name" value="MIP"/>
</dbReference>
<dbReference type="InterPro" id="IPR022357">
    <property type="entry name" value="MIP_CS"/>
</dbReference>
<dbReference type="PANTHER" id="PTHR45665:SF8">
    <property type="entry name" value="AQUAPORIN TIP4-2-RELATED"/>
    <property type="match status" value="1"/>
</dbReference>
<dbReference type="PANTHER" id="PTHR45665">
    <property type="entry name" value="AQUAPORIN-8"/>
    <property type="match status" value="1"/>
</dbReference>
<dbReference type="Pfam" id="PF00230">
    <property type="entry name" value="MIP"/>
    <property type="match status" value="1"/>
</dbReference>
<dbReference type="PRINTS" id="PR00783">
    <property type="entry name" value="MINTRINSICP"/>
</dbReference>
<dbReference type="SUPFAM" id="SSF81338">
    <property type="entry name" value="Aquaporin-like"/>
    <property type="match status" value="1"/>
</dbReference>
<dbReference type="PROSITE" id="PS00221">
    <property type="entry name" value="MIP"/>
    <property type="match status" value="1"/>
</dbReference>
<gene>
    <name type="primary">TIP4-3</name>
</gene>
<comment type="function">
    <text evidence="1">Aquaporins facilitate the transport of water and small neutral solutes across cell membranes.</text>
</comment>
<comment type="subcellular location">
    <subcellularLocation>
        <location evidence="1">Vacuole membrane</location>
        <topology evidence="1">Multi-pass membrane protein</topology>
    </subcellularLocation>
    <text>Tonoplast.</text>
</comment>
<comment type="domain">
    <text>Aquaporins contain two tandem repeats each containing three membrane-spanning domains and a pore-forming loop with the signature motif Asn-Pro-Ala (NPA).</text>
</comment>
<comment type="similarity">
    <text evidence="3">Belongs to the MIP/aquaporin (TC 1.A.8) family. TIP (TC 1.A.8.10) subfamily.</text>
</comment>
<sequence length="249" mass="25259">MGKLTLGHRGEASEPDFFRGVLGELVLTFLFVFIGVGAAMTDGATTKGSTAGGDLTAVALGQALVVAVIATAGFHISGGHVNPAVTLSLAVGGHVTLFRSSLYIAAQMLASSAACFLLRWLTGGLATPVHALAEGVGPLQGVVAEAVFTFSLLFVIYATILDPRKLLPGAGPLLTGLLVGANSVAGAALSGASMNPARSFGPAVASGVWTHHWVYWVGPLAGGPLAVLVYECCFMAAAPTHDLLPQQDP</sequence>
<organism>
    <name type="scientific">Zea mays</name>
    <name type="common">Maize</name>
    <dbReference type="NCBI Taxonomy" id="4577"/>
    <lineage>
        <taxon>Eukaryota</taxon>
        <taxon>Viridiplantae</taxon>
        <taxon>Streptophyta</taxon>
        <taxon>Embryophyta</taxon>
        <taxon>Tracheophyta</taxon>
        <taxon>Spermatophyta</taxon>
        <taxon>Magnoliopsida</taxon>
        <taxon>Liliopsida</taxon>
        <taxon>Poales</taxon>
        <taxon>Poaceae</taxon>
        <taxon>PACMAD clade</taxon>
        <taxon>Panicoideae</taxon>
        <taxon>Andropogonodae</taxon>
        <taxon>Andropogoneae</taxon>
        <taxon>Tripsacinae</taxon>
        <taxon>Zea</taxon>
    </lineage>
</organism>
<keyword id="KW-0472">Membrane</keyword>
<keyword id="KW-1185">Reference proteome</keyword>
<keyword id="KW-0677">Repeat</keyword>
<keyword id="KW-0812">Transmembrane</keyword>
<keyword id="KW-1133">Transmembrane helix</keyword>
<keyword id="KW-0813">Transport</keyword>
<keyword id="KW-0926">Vacuole</keyword>
<name>TIP43_MAIZE</name>
<evidence type="ECO:0000250" key="1"/>
<evidence type="ECO:0000255" key="2"/>
<evidence type="ECO:0000305" key="3"/>
<reference key="1">
    <citation type="journal article" date="2001" name="Plant Physiol.">
        <title>Aquaporins constitute a large and highly divergent protein family in maize.</title>
        <authorList>
            <person name="Chaumont F."/>
            <person name="Barrieu F."/>
            <person name="Wojcik E."/>
            <person name="Chrispeels M.J."/>
            <person name="Jung R."/>
        </authorList>
    </citation>
    <scope>NUCLEOTIDE SEQUENCE [MRNA]</scope>
    <scope>GENE FAMILY</scope>
    <scope>NOMENCLATURE</scope>
    <source>
        <strain>cv. B73</strain>
    </source>
</reference>